<comment type="function">
    <text evidence="1">Involved in the biosynthesis of the chorismate, which leads to the biosynthesis of aromatic amino acids. Catalyzes the reversible NADPH linked reduction of 3-dehydroshikimate (DHSA) to yield shikimate (SA).</text>
</comment>
<comment type="catalytic activity">
    <reaction evidence="1">
        <text>shikimate + NADP(+) = 3-dehydroshikimate + NADPH + H(+)</text>
        <dbReference type="Rhea" id="RHEA:17737"/>
        <dbReference type="ChEBI" id="CHEBI:15378"/>
        <dbReference type="ChEBI" id="CHEBI:16630"/>
        <dbReference type="ChEBI" id="CHEBI:36208"/>
        <dbReference type="ChEBI" id="CHEBI:57783"/>
        <dbReference type="ChEBI" id="CHEBI:58349"/>
        <dbReference type="EC" id="1.1.1.25"/>
    </reaction>
</comment>
<comment type="pathway">
    <text evidence="1">Metabolic intermediate biosynthesis; chorismate biosynthesis; chorismate from D-erythrose 4-phosphate and phosphoenolpyruvate: step 4/7.</text>
</comment>
<comment type="subunit">
    <text evidence="1">Homodimer.</text>
</comment>
<comment type="similarity">
    <text evidence="1">Belongs to the shikimate dehydrogenase family.</text>
</comment>
<accession>C3NG01</accession>
<gene>
    <name evidence="1" type="primary">aroE</name>
    <name type="ordered locus">YN1551_1012</name>
</gene>
<sequence>MLEEINYDTKLFGLIGKNIKYTLSPYIHNFSFTTLGINAVYLVFDLDEMKFNRIINGLLEIAEGLNVTIPYKEEVMKYLDNTDTYSTRIQAVNTIYKKGGYNTDYLAIKNLVRKKIGNMSGYECYVYGAGGAAKAAAFALSELGCSSISIVNRTNLRANELVELLNKNGYNASIKENCNSTSNIVVVNSTPNPSVVPENCIQKSELVIEFVYKPVETELIKNAKKYSIKYIDGLEILVNQAVEAEKIWFNKSVSDEKIIEYLYARKLVW</sequence>
<evidence type="ECO:0000255" key="1">
    <source>
        <dbReference type="HAMAP-Rule" id="MF_00222"/>
    </source>
</evidence>
<proteinExistence type="inferred from homology"/>
<feature type="chain" id="PRO_1000204281" description="Shikimate dehydrogenase (NADP(+))">
    <location>
        <begin position="1"/>
        <end position="269"/>
    </location>
</feature>
<feature type="active site" description="Proton acceptor" evidence="1">
    <location>
        <position position="72"/>
    </location>
</feature>
<feature type="binding site" evidence="1">
    <location>
        <begin position="22"/>
        <end position="24"/>
    </location>
    <ligand>
        <name>shikimate</name>
        <dbReference type="ChEBI" id="CHEBI:36208"/>
    </ligand>
</feature>
<feature type="binding site" evidence="1">
    <location>
        <position position="68"/>
    </location>
    <ligand>
        <name>shikimate</name>
        <dbReference type="ChEBI" id="CHEBI:36208"/>
    </ligand>
</feature>
<feature type="binding site" evidence="1">
    <location>
        <position position="93"/>
    </location>
    <ligand>
        <name>shikimate</name>
        <dbReference type="ChEBI" id="CHEBI:36208"/>
    </ligand>
</feature>
<feature type="binding site" evidence="1">
    <location>
        <position position="104"/>
    </location>
    <ligand>
        <name>shikimate</name>
        <dbReference type="ChEBI" id="CHEBI:36208"/>
    </ligand>
</feature>
<feature type="binding site" evidence="1">
    <location>
        <begin position="128"/>
        <end position="132"/>
    </location>
    <ligand>
        <name>NADP(+)</name>
        <dbReference type="ChEBI" id="CHEBI:58349"/>
    </ligand>
</feature>
<feature type="binding site" evidence="1">
    <location>
        <begin position="152"/>
        <end position="157"/>
    </location>
    <ligand>
        <name>NADP(+)</name>
        <dbReference type="ChEBI" id="CHEBI:58349"/>
    </ligand>
</feature>
<feature type="binding site" evidence="1">
    <location>
        <position position="210"/>
    </location>
    <ligand>
        <name>NADP(+)</name>
        <dbReference type="ChEBI" id="CHEBI:58349"/>
    </ligand>
</feature>
<feature type="binding site" evidence="1">
    <location>
        <position position="212"/>
    </location>
    <ligand>
        <name>shikimate</name>
        <dbReference type="ChEBI" id="CHEBI:36208"/>
    </ligand>
</feature>
<feature type="binding site" evidence="1">
    <location>
        <position position="233"/>
    </location>
    <ligand>
        <name>NADP(+)</name>
        <dbReference type="ChEBI" id="CHEBI:58349"/>
    </ligand>
</feature>
<keyword id="KW-0028">Amino-acid biosynthesis</keyword>
<keyword id="KW-0057">Aromatic amino acid biosynthesis</keyword>
<keyword id="KW-0521">NADP</keyword>
<keyword id="KW-0560">Oxidoreductase</keyword>
<organism>
    <name type="scientific">Saccharolobus islandicus (strain Y.N.15.51 / Yellowstone #2)</name>
    <name type="common">Sulfolobus islandicus</name>
    <dbReference type="NCBI Taxonomy" id="419942"/>
    <lineage>
        <taxon>Archaea</taxon>
        <taxon>Thermoproteota</taxon>
        <taxon>Thermoprotei</taxon>
        <taxon>Sulfolobales</taxon>
        <taxon>Sulfolobaceae</taxon>
        <taxon>Saccharolobus</taxon>
    </lineage>
</organism>
<protein>
    <recommendedName>
        <fullName evidence="1">Shikimate dehydrogenase (NADP(+))</fullName>
        <shortName evidence="1">SDH</shortName>
        <ecNumber evidence="1">1.1.1.25</ecNumber>
    </recommendedName>
</protein>
<name>AROE_SACI1</name>
<reference key="1">
    <citation type="journal article" date="2009" name="Proc. Natl. Acad. Sci. U.S.A.">
        <title>Biogeography of the Sulfolobus islandicus pan-genome.</title>
        <authorList>
            <person name="Reno M.L."/>
            <person name="Held N.L."/>
            <person name="Fields C.J."/>
            <person name="Burke P.V."/>
            <person name="Whitaker R.J."/>
        </authorList>
    </citation>
    <scope>NUCLEOTIDE SEQUENCE [LARGE SCALE GENOMIC DNA]</scope>
    <source>
        <strain>Y.N.15.51 / Yellowstone #2</strain>
    </source>
</reference>
<dbReference type="EC" id="1.1.1.25" evidence="1"/>
<dbReference type="EMBL" id="CP001404">
    <property type="protein sequence ID" value="ACP48119.1"/>
    <property type="molecule type" value="Genomic_DNA"/>
</dbReference>
<dbReference type="RefSeq" id="WP_012717305.1">
    <property type="nucleotide sequence ID" value="NC_012623.1"/>
</dbReference>
<dbReference type="SMR" id="C3NG01"/>
<dbReference type="GeneID" id="7809624"/>
<dbReference type="KEGG" id="sin:YN1551_1012"/>
<dbReference type="HOGENOM" id="CLU_044063_3_1_2"/>
<dbReference type="UniPathway" id="UPA00053">
    <property type="reaction ID" value="UER00087"/>
</dbReference>
<dbReference type="Proteomes" id="UP000006818">
    <property type="component" value="Chromosome"/>
</dbReference>
<dbReference type="GO" id="GO:0004764">
    <property type="term" value="F:shikimate 3-dehydrogenase (NADP+) activity"/>
    <property type="evidence" value="ECO:0007669"/>
    <property type="project" value="UniProtKB-UniRule"/>
</dbReference>
<dbReference type="GO" id="GO:0008652">
    <property type="term" value="P:amino acid biosynthetic process"/>
    <property type="evidence" value="ECO:0007669"/>
    <property type="project" value="UniProtKB-KW"/>
</dbReference>
<dbReference type="GO" id="GO:0009073">
    <property type="term" value="P:aromatic amino acid family biosynthetic process"/>
    <property type="evidence" value="ECO:0007669"/>
    <property type="project" value="UniProtKB-KW"/>
</dbReference>
<dbReference type="GO" id="GO:0009423">
    <property type="term" value="P:chorismate biosynthetic process"/>
    <property type="evidence" value="ECO:0007669"/>
    <property type="project" value="UniProtKB-UniRule"/>
</dbReference>
<dbReference type="GO" id="GO:0019632">
    <property type="term" value="P:shikimate metabolic process"/>
    <property type="evidence" value="ECO:0007669"/>
    <property type="project" value="TreeGrafter"/>
</dbReference>
<dbReference type="CDD" id="cd01065">
    <property type="entry name" value="NAD_bind_Shikimate_DH"/>
    <property type="match status" value="1"/>
</dbReference>
<dbReference type="Gene3D" id="3.40.50.10860">
    <property type="entry name" value="Leucine Dehydrogenase, chain A, domain 1"/>
    <property type="match status" value="1"/>
</dbReference>
<dbReference type="Gene3D" id="3.40.50.720">
    <property type="entry name" value="NAD(P)-binding Rossmann-like Domain"/>
    <property type="match status" value="1"/>
</dbReference>
<dbReference type="HAMAP" id="MF_00222">
    <property type="entry name" value="Shikimate_DH_AroE"/>
    <property type="match status" value="1"/>
</dbReference>
<dbReference type="InterPro" id="IPR046346">
    <property type="entry name" value="Aminoacid_DH-like_N_sf"/>
</dbReference>
<dbReference type="InterPro" id="IPR036291">
    <property type="entry name" value="NAD(P)-bd_dom_sf"/>
</dbReference>
<dbReference type="InterPro" id="IPR013708">
    <property type="entry name" value="Shikimate_DH-bd_N"/>
</dbReference>
<dbReference type="InterPro" id="IPR022893">
    <property type="entry name" value="Shikimate_DH_fam"/>
</dbReference>
<dbReference type="InterPro" id="IPR006151">
    <property type="entry name" value="Shikm_DH/Glu-tRNA_Rdtase"/>
</dbReference>
<dbReference type="PANTHER" id="PTHR21089:SF1">
    <property type="entry name" value="BIFUNCTIONAL 3-DEHYDROQUINATE DEHYDRATASE_SHIKIMATE DEHYDROGENASE, CHLOROPLASTIC"/>
    <property type="match status" value="1"/>
</dbReference>
<dbReference type="PANTHER" id="PTHR21089">
    <property type="entry name" value="SHIKIMATE DEHYDROGENASE"/>
    <property type="match status" value="1"/>
</dbReference>
<dbReference type="Pfam" id="PF01488">
    <property type="entry name" value="Shikimate_DH"/>
    <property type="match status" value="1"/>
</dbReference>
<dbReference type="Pfam" id="PF08501">
    <property type="entry name" value="Shikimate_dh_N"/>
    <property type="match status" value="1"/>
</dbReference>
<dbReference type="SUPFAM" id="SSF53223">
    <property type="entry name" value="Aminoacid dehydrogenase-like, N-terminal domain"/>
    <property type="match status" value="1"/>
</dbReference>
<dbReference type="SUPFAM" id="SSF51735">
    <property type="entry name" value="NAD(P)-binding Rossmann-fold domains"/>
    <property type="match status" value="1"/>
</dbReference>